<protein>
    <recommendedName>
        <fullName evidence="1">Small heat shock protein IbpA</fullName>
    </recommendedName>
    <alternativeName>
        <fullName evidence="1">16 kDa heat shock protein A</fullName>
    </alternativeName>
</protein>
<reference key="1">
    <citation type="journal article" date="2001" name="Nature">
        <title>Genome sequence of Yersinia pestis, the causative agent of plague.</title>
        <authorList>
            <person name="Parkhill J."/>
            <person name="Wren B.W."/>
            <person name="Thomson N.R."/>
            <person name="Titball R.W."/>
            <person name="Holden M.T.G."/>
            <person name="Prentice M.B."/>
            <person name="Sebaihia M."/>
            <person name="James K.D."/>
            <person name="Churcher C.M."/>
            <person name="Mungall K.L."/>
            <person name="Baker S."/>
            <person name="Basham D."/>
            <person name="Bentley S.D."/>
            <person name="Brooks K."/>
            <person name="Cerdeno-Tarraga A.-M."/>
            <person name="Chillingworth T."/>
            <person name="Cronin A."/>
            <person name="Davies R.M."/>
            <person name="Davis P."/>
            <person name="Dougan G."/>
            <person name="Feltwell T."/>
            <person name="Hamlin N."/>
            <person name="Holroyd S."/>
            <person name="Jagels K."/>
            <person name="Karlyshev A.V."/>
            <person name="Leather S."/>
            <person name="Moule S."/>
            <person name="Oyston P.C.F."/>
            <person name="Quail M.A."/>
            <person name="Rutherford K.M."/>
            <person name="Simmonds M."/>
            <person name="Skelton J."/>
            <person name="Stevens K."/>
            <person name="Whitehead S."/>
            <person name="Barrell B.G."/>
        </authorList>
    </citation>
    <scope>NUCLEOTIDE SEQUENCE [LARGE SCALE GENOMIC DNA]</scope>
    <source>
        <strain>CO-92 / Biovar Orientalis</strain>
    </source>
</reference>
<reference key="2">
    <citation type="journal article" date="2002" name="J. Bacteriol.">
        <title>Genome sequence of Yersinia pestis KIM.</title>
        <authorList>
            <person name="Deng W."/>
            <person name="Burland V."/>
            <person name="Plunkett G. III"/>
            <person name="Boutin A."/>
            <person name="Mayhew G.F."/>
            <person name="Liss P."/>
            <person name="Perna N.T."/>
            <person name="Rose D.J."/>
            <person name="Mau B."/>
            <person name="Zhou S."/>
            <person name="Schwartz D.C."/>
            <person name="Fetherston J.D."/>
            <person name="Lindler L.E."/>
            <person name="Brubaker R.R."/>
            <person name="Plano G.V."/>
            <person name="Straley S.C."/>
            <person name="McDonough K.A."/>
            <person name="Nilles M.L."/>
            <person name="Matson J.S."/>
            <person name="Blattner F.R."/>
            <person name="Perry R.D."/>
        </authorList>
    </citation>
    <scope>NUCLEOTIDE SEQUENCE [LARGE SCALE GENOMIC DNA]</scope>
    <source>
        <strain>KIM10+ / Biovar Mediaevalis</strain>
    </source>
</reference>
<reference key="3">
    <citation type="journal article" date="2004" name="DNA Res.">
        <title>Complete genome sequence of Yersinia pestis strain 91001, an isolate avirulent to humans.</title>
        <authorList>
            <person name="Song Y."/>
            <person name="Tong Z."/>
            <person name="Wang J."/>
            <person name="Wang L."/>
            <person name="Guo Z."/>
            <person name="Han Y."/>
            <person name="Zhang J."/>
            <person name="Pei D."/>
            <person name="Zhou D."/>
            <person name="Qin H."/>
            <person name="Pang X."/>
            <person name="Han Y."/>
            <person name="Zhai J."/>
            <person name="Li M."/>
            <person name="Cui B."/>
            <person name="Qi Z."/>
            <person name="Jin L."/>
            <person name="Dai R."/>
            <person name="Chen F."/>
            <person name="Li S."/>
            <person name="Ye C."/>
            <person name="Du Z."/>
            <person name="Lin W."/>
            <person name="Wang J."/>
            <person name="Yu J."/>
            <person name="Yang H."/>
            <person name="Wang J."/>
            <person name="Huang P."/>
            <person name="Yang R."/>
        </authorList>
    </citation>
    <scope>NUCLEOTIDE SEQUENCE [LARGE SCALE GENOMIC DNA]</scope>
    <source>
        <strain>91001 / Biovar Mediaevalis</strain>
    </source>
</reference>
<keyword id="KW-0143">Chaperone</keyword>
<keyword id="KW-0963">Cytoplasm</keyword>
<keyword id="KW-1185">Reference proteome</keyword>
<keyword id="KW-0346">Stress response</keyword>
<feature type="chain" id="PRO_0000126026" description="Small heat shock protein IbpA">
    <location>
        <begin position="1"/>
        <end position="137"/>
    </location>
</feature>
<feature type="domain" description="sHSP" evidence="2">
    <location>
        <begin position="28"/>
        <end position="137"/>
    </location>
</feature>
<sequence length="137" mass="15648">MRNSDLAPLYRSAIGFDRLFNLLESGQNQSNGGYPPYNVELVDENNYRIAIAVAGFAEQELEITTQDNLLIVRGSHANEPAQRTYLYQGIAERNFERKFQLAEHIKIKGANLVNGLLYIDLERLVPESLKPRRIEIK</sequence>
<name>IBPA_YERPE</name>
<evidence type="ECO:0000255" key="1">
    <source>
        <dbReference type="HAMAP-Rule" id="MF_02000"/>
    </source>
</evidence>
<evidence type="ECO:0000255" key="2">
    <source>
        <dbReference type="PROSITE-ProRule" id="PRU00285"/>
    </source>
</evidence>
<accession>Q8Z9V5</accession>
<accession>Q0W9U9</accession>
<accession>Q74PC4</accession>
<accession>Q7CFP0</accession>
<comment type="function">
    <text evidence="1">Associates with aggregated proteins, together with IbpB, to stabilize and protect them from irreversible denaturation and extensive proteolysis during heat shock and oxidative stress. Aggregated proteins bound to the IbpAB complex are more efficiently refolded and reactivated by the ATP-dependent chaperone systems ClpB and DnaK/DnaJ/GrpE. Its activity is ATP-independent.</text>
</comment>
<comment type="subunit">
    <text evidence="1">Monomer. Forms homomultimers of about 100-150 subunits at optimal growth temperatures. Conformation changes to monomers at high temperatures or high ionic concentrations.</text>
</comment>
<comment type="subcellular location">
    <subcellularLocation>
        <location evidence="1">Cytoplasm</location>
    </subcellularLocation>
</comment>
<comment type="similarity">
    <text evidence="1 2">Belongs to the small heat shock protein (HSP20) family.</text>
</comment>
<organism>
    <name type="scientific">Yersinia pestis</name>
    <dbReference type="NCBI Taxonomy" id="632"/>
    <lineage>
        <taxon>Bacteria</taxon>
        <taxon>Pseudomonadati</taxon>
        <taxon>Pseudomonadota</taxon>
        <taxon>Gammaproteobacteria</taxon>
        <taxon>Enterobacterales</taxon>
        <taxon>Yersiniaceae</taxon>
        <taxon>Yersinia</taxon>
    </lineage>
</organism>
<dbReference type="EMBL" id="AL590842">
    <property type="protein sequence ID" value="CAL22655.1"/>
    <property type="molecule type" value="Genomic_DNA"/>
</dbReference>
<dbReference type="EMBL" id="AE009952">
    <property type="protein sequence ID" value="AAM87645.1"/>
    <property type="molecule type" value="Genomic_DNA"/>
</dbReference>
<dbReference type="EMBL" id="AE017042">
    <property type="protein sequence ID" value="AAS64134.1"/>
    <property type="molecule type" value="Genomic_DNA"/>
</dbReference>
<dbReference type="PIR" id="AD0496">
    <property type="entry name" value="AD0496"/>
</dbReference>
<dbReference type="RefSeq" id="WP_002209636.1">
    <property type="nucleotide sequence ID" value="NZ_WUCM01000035.1"/>
</dbReference>
<dbReference type="RefSeq" id="YP_002348939.1">
    <property type="nucleotide sequence ID" value="NC_003143.1"/>
</dbReference>
<dbReference type="SMR" id="Q8Z9V5"/>
<dbReference type="STRING" id="214092.YPO4085"/>
<dbReference type="PaxDb" id="214092-YPO4085"/>
<dbReference type="DNASU" id="1149049"/>
<dbReference type="EnsemblBacteria" id="AAS64134">
    <property type="protein sequence ID" value="AAS64134"/>
    <property type="gene ID" value="YP_3994"/>
</dbReference>
<dbReference type="GeneID" id="96663430"/>
<dbReference type="KEGG" id="ype:YPO4085"/>
<dbReference type="KEGG" id="ypk:y4102"/>
<dbReference type="KEGG" id="ypm:YP_3994"/>
<dbReference type="PATRIC" id="fig|214092.21.peg.4626"/>
<dbReference type="eggNOG" id="COG0071">
    <property type="taxonomic scope" value="Bacteria"/>
</dbReference>
<dbReference type="HOGENOM" id="CLU_046737_4_2_6"/>
<dbReference type="OMA" id="TAHDNML"/>
<dbReference type="OrthoDB" id="6871152at2"/>
<dbReference type="Proteomes" id="UP000000815">
    <property type="component" value="Chromosome"/>
</dbReference>
<dbReference type="Proteomes" id="UP000001019">
    <property type="component" value="Chromosome"/>
</dbReference>
<dbReference type="Proteomes" id="UP000002490">
    <property type="component" value="Chromosome"/>
</dbReference>
<dbReference type="GO" id="GO:0005737">
    <property type="term" value="C:cytoplasm"/>
    <property type="evidence" value="ECO:0000318"/>
    <property type="project" value="GO_Central"/>
</dbReference>
<dbReference type="GO" id="GO:0050821">
    <property type="term" value="P:protein stabilization"/>
    <property type="evidence" value="ECO:0007669"/>
    <property type="project" value="UniProtKB-UniRule"/>
</dbReference>
<dbReference type="CDD" id="cd06470">
    <property type="entry name" value="ACD_IbpA-B_like"/>
    <property type="match status" value="1"/>
</dbReference>
<dbReference type="FunFam" id="2.60.40.790:FF:000002">
    <property type="entry name" value="Small heat shock protein IbpA"/>
    <property type="match status" value="1"/>
</dbReference>
<dbReference type="Gene3D" id="2.60.40.790">
    <property type="match status" value="1"/>
</dbReference>
<dbReference type="HAMAP" id="MF_02000">
    <property type="entry name" value="HSP20_IbpA"/>
    <property type="match status" value="1"/>
</dbReference>
<dbReference type="InterPro" id="IPR002068">
    <property type="entry name" value="A-crystallin/Hsp20_dom"/>
</dbReference>
<dbReference type="InterPro" id="IPR037913">
    <property type="entry name" value="ACD_IbpA/B"/>
</dbReference>
<dbReference type="InterPro" id="IPR008978">
    <property type="entry name" value="HSP20-like_chaperone"/>
</dbReference>
<dbReference type="InterPro" id="IPR023728">
    <property type="entry name" value="HSP20_IbpA"/>
</dbReference>
<dbReference type="NCBIfam" id="NF008013">
    <property type="entry name" value="PRK10743.1"/>
    <property type="match status" value="1"/>
</dbReference>
<dbReference type="PANTHER" id="PTHR47062">
    <property type="match status" value="1"/>
</dbReference>
<dbReference type="PANTHER" id="PTHR47062:SF1">
    <property type="entry name" value="SMALL HEAT SHOCK PROTEIN IBPA"/>
    <property type="match status" value="1"/>
</dbReference>
<dbReference type="Pfam" id="PF00011">
    <property type="entry name" value="HSP20"/>
    <property type="match status" value="1"/>
</dbReference>
<dbReference type="SUPFAM" id="SSF49764">
    <property type="entry name" value="HSP20-like chaperones"/>
    <property type="match status" value="1"/>
</dbReference>
<dbReference type="PROSITE" id="PS01031">
    <property type="entry name" value="SHSP"/>
    <property type="match status" value="1"/>
</dbReference>
<gene>
    <name evidence="1" type="primary">ibpA</name>
    <name type="ordered locus">YPO4085</name>
    <name type="ordered locus">y4102</name>
    <name type="ordered locus">YP_3994</name>
</gene>
<proteinExistence type="inferred from homology"/>